<feature type="chain" id="PRO_0000324900" description="ADP-ribose 1''-phosphate phosphatase">
    <location>
        <begin position="1"/>
        <end position="254"/>
    </location>
</feature>
<feature type="domain" description="Macro" evidence="2">
    <location>
        <begin position="1"/>
        <end position="254"/>
    </location>
</feature>
<feature type="region of interest" description="Disordered" evidence="3">
    <location>
        <begin position="86"/>
        <end position="125"/>
    </location>
</feature>
<feature type="compositionally biased region" description="Low complexity" evidence="3">
    <location>
        <begin position="91"/>
        <end position="102"/>
    </location>
</feature>
<feature type="binding site" evidence="1">
    <location>
        <begin position="9"/>
        <end position="11"/>
    </location>
    <ligand>
        <name>substrate</name>
    </ligand>
</feature>
<feature type="binding site" evidence="1">
    <location>
        <begin position="23"/>
        <end position="25"/>
    </location>
    <ligand>
        <name>substrate</name>
    </ligand>
</feature>
<feature type="binding site" evidence="1">
    <location>
        <begin position="30"/>
        <end position="35"/>
    </location>
    <ligand>
        <name>substrate</name>
    </ligand>
</feature>
<feature type="binding site" evidence="1">
    <location>
        <begin position="220"/>
        <end position="226"/>
    </location>
    <ligand>
        <name>substrate</name>
    </ligand>
</feature>
<reference key="1">
    <citation type="journal article" date="2009" name="Genome Res.">
        <title>Comparative genomic analyses of the human fungal pathogens Coccidioides and their relatives.</title>
        <authorList>
            <person name="Sharpton T.J."/>
            <person name="Stajich J.E."/>
            <person name="Rounsley S.D."/>
            <person name="Gardner M.J."/>
            <person name="Wortman J.R."/>
            <person name="Jordar V.S."/>
            <person name="Maiti R."/>
            <person name="Kodira C.D."/>
            <person name="Neafsey D.E."/>
            <person name="Zeng Q."/>
            <person name="Hung C.-Y."/>
            <person name="McMahan C."/>
            <person name="Muszewska A."/>
            <person name="Grynberg M."/>
            <person name="Mandel M.A."/>
            <person name="Kellner E.M."/>
            <person name="Barker B.M."/>
            <person name="Galgiani J.N."/>
            <person name="Orbach M.J."/>
            <person name="Kirkland T.N."/>
            <person name="Cole G.T."/>
            <person name="Henn M.R."/>
            <person name="Birren B.W."/>
            <person name="Taylor J.W."/>
        </authorList>
    </citation>
    <scope>NUCLEOTIDE SEQUENCE [LARGE SCALE GENOMIC DNA]</scope>
    <source>
        <strain>NAm1 / WU24</strain>
    </source>
</reference>
<sequence length="254" mass="27451">MSIITEIQGDLFDAPEGAALIHACNCQGSWGKGIAATFKEKYPAAYRIFRSHCQQYLSHPQTWTQTQTSRQQSRAFKLPEGTALIIPPQPADYQPQPQPQSQTAPLSNCGRGRGRGRGRAGGGALHNSRELTALSRPAGKKHWIICLFTSWHYGRWSRSPPDIILENTMSAMADLKRQIAAAAAASSTTSPATTTTTTTALAATGGCEEEQLGELWGCRLNAGLFEVPWERTKAVLEEAGLAVTIVQPPGSGYE</sequence>
<organism>
    <name type="scientific">Ajellomyces capsulatus (strain NAm1 / WU24)</name>
    <name type="common">Darling's disease fungus</name>
    <name type="synonym">Histoplasma capsulatum</name>
    <dbReference type="NCBI Taxonomy" id="2059318"/>
    <lineage>
        <taxon>Eukaryota</taxon>
        <taxon>Fungi</taxon>
        <taxon>Dikarya</taxon>
        <taxon>Ascomycota</taxon>
        <taxon>Pezizomycotina</taxon>
        <taxon>Eurotiomycetes</taxon>
        <taxon>Eurotiomycetidae</taxon>
        <taxon>Onygenales</taxon>
        <taxon>Ajellomycetaceae</taxon>
        <taxon>Histoplasma</taxon>
    </lineage>
</organism>
<evidence type="ECO:0000250" key="1"/>
<evidence type="ECO:0000255" key="2">
    <source>
        <dbReference type="PROSITE-ProRule" id="PRU00490"/>
    </source>
</evidence>
<evidence type="ECO:0000256" key="3">
    <source>
        <dbReference type="SAM" id="MobiDB-lite"/>
    </source>
</evidence>
<evidence type="ECO:0000305" key="4"/>
<name>POA1_AJECN</name>
<comment type="function">
    <text evidence="1">Highly specific phosphatase involved in the metabolism of ADP-ribose 1''-phosphate (Appr1p) which is produced as a consequence of tRNA splicing.</text>
</comment>
<comment type="catalytic activity">
    <reaction>
        <text>ADP-alpha-D-ribose 1''-phosphate + H2O = ADP-D-ribose + phosphate</text>
        <dbReference type="Rhea" id="RHEA:25029"/>
        <dbReference type="ChEBI" id="CHEBI:15377"/>
        <dbReference type="ChEBI" id="CHEBI:43474"/>
        <dbReference type="ChEBI" id="CHEBI:57967"/>
        <dbReference type="ChEBI" id="CHEBI:58753"/>
        <dbReference type="EC" id="3.1.3.84"/>
    </reaction>
</comment>
<comment type="similarity">
    <text evidence="4">Belongs to the POA1 family.</text>
</comment>
<proteinExistence type="inferred from homology"/>
<keyword id="KW-0378">Hydrolase</keyword>
<keyword id="KW-0904">Protein phosphatase</keyword>
<keyword id="KW-1185">Reference proteome</keyword>
<accession>A6QXU0</accession>
<gene>
    <name type="primary">POA1</name>
    <name type="ORF">HCAG_02197</name>
</gene>
<dbReference type="EC" id="3.1.3.84"/>
<dbReference type="EMBL" id="CH476656">
    <property type="protein sequence ID" value="EDN05594.1"/>
    <property type="molecule type" value="Genomic_DNA"/>
</dbReference>
<dbReference type="SMR" id="A6QXU0"/>
<dbReference type="STRING" id="339724.A6QXU0"/>
<dbReference type="KEGG" id="aje:HCAG_02197"/>
<dbReference type="VEuPathDB" id="FungiDB:HCAG_02197"/>
<dbReference type="HOGENOM" id="CLU_054419_1_0_1"/>
<dbReference type="OMA" id="CQGSWGK"/>
<dbReference type="OrthoDB" id="10915at299071"/>
<dbReference type="Proteomes" id="UP000009297">
    <property type="component" value="Unassembled WGS sequence"/>
</dbReference>
<dbReference type="GO" id="GO:0004721">
    <property type="term" value="F:phosphoprotein phosphatase activity"/>
    <property type="evidence" value="ECO:0007669"/>
    <property type="project" value="UniProtKB-KW"/>
</dbReference>
<dbReference type="GO" id="GO:0140291">
    <property type="term" value="P:peptidyl-glutamate ADP-deribosylation"/>
    <property type="evidence" value="ECO:0007669"/>
    <property type="project" value="TreeGrafter"/>
</dbReference>
<dbReference type="Gene3D" id="3.40.220.10">
    <property type="entry name" value="Leucine Aminopeptidase, subunit E, domain 1"/>
    <property type="match status" value="1"/>
</dbReference>
<dbReference type="InterPro" id="IPR050892">
    <property type="entry name" value="ADP-ribose_metab_enzymes"/>
</dbReference>
<dbReference type="InterPro" id="IPR002589">
    <property type="entry name" value="Macro_dom"/>
</dbReference>
<dbReference type="InterPro" id="IPR043472">
    <property type="entry name" value="Macro_dom-like"/>
</dbReference>
<dbReference type="PANTHER" id="PTHR12521:SF0">
    <property type="entry name" value="ADP-RIBOSE GLYCOHYDROLASE OARD1"/>
    <property type="match status" value="1"/>
</dbReference>
<dbReference type="PANTHER" id="PTHR12521">
    <property type="entry name" value="PROTEIN C6ORF130"/>
    <property type="match status" value="1"/>
</dbReference>
<dbReference type="SUPFAM" id="SSF52949">
    <property type="entry name" value="Macro domain-like"/>
    <property type="match status" value="1"/>
</dbReference>
<dbReference type="PROSITE" id="PS51154">
    <property type="entry name" value="MACRO"/>
    <property type="match status" value="1"/>
</dbReference>
<protein>
    <recommendedName>
        <fullName>ADP-ribose 1''-phosphate phosphatase</fullName>
        <ecNumber>3.1.3.84</ecNumber>
    </recommendedName>
</protein>